<keyword id="KW-0963">Cytoplasm</keyword>
<keyword id="KW-0342">GTP-binding</keyword>
<keyword id="KW-0547">Nucleotide-binding</keyword>
<keyword id="KW-0648">Protein biosynthesis</keyword>
<name>RF3_STRPZ</name>
<reference key="1">
    <citation type="journal article" date="2008" name="J. Bacteriol.">
        <title>Genome sequence of a nephritogenic and highly transformable M49 strain of Streptococcus pyogenes.</title>
        <authorList>
            <person name="McShan W.M."/>
            <person name="Ferretti J.J."/>
            <person name="Karasawa T."/>
            <person name="Suvorov A.N."/>
            <person name="Lin S."/>
            <person name="Qin B."/>
            <person name="Jia H."/>
            <person name="Kenton S."/>
            <person name="Najar F."/>
            <person name="Wu H."/>
            <person name="Scott J."/>
            <person name="Roe B.A."/>
            <person name="Savic D.J."/>
        </authorList>
    </citation>
    <scope>NUCLEOTIDE SEQUENCE [LARGE SCALE GENOMIC DNA]</scope>
    <source>
        <strain>NZ131</strain>
    </source>
</reference>
<proteinExistence type="inferred from homology"/>
<protein>
    <recommendedName>
        <fullName evidence="1">Peptide chain release factor 3</fullName>
        <shortName evidence="1">RF-3</shortName>
    </recommendedName>
</protein>
<evidence type="ECO:0000255" key="1">
    <source>
        <dbReference type="HAMAP-Rule" id="MF_00072"/>
    </source>
</evidence>
<accession>B5XM60</accession>
<sequence>MSLTEEIKKRRTFAIISHPDAGKTTITEQLLYFGGEIREAGTVKGKKSGTFAKSDWMDIEKQRGISVTSSVMQFDYAGKRVNILDTPGHEDFSEDTYRTLMAVDAAVMVVDSAKGIEAQTKKLFEVVKHRNIPVFTFINKLDRDGREPLELLEELEEVLGIASYPMNWPIGMGRAFEGLYDLHNKRLELYKGDERFASIEDGDQLFANNPFYEQVKEDIELLQEAGNDFSEQAILDGDLTPVFFGSALTNFGVQTFLDTFLEFAPEPHGHKTTEGNVVDPLTKDFSGFVFKIQANMDPKHRDRIAFVRIVSGEFERGMGVNLTRTGKGAKLSNVTQFMAESRENVTNAVAGDIIGVYDTGTYQVGDTLTVGKNKFEFEPLPTFTPEIFMKVSPKNVMKQKSFHKGIEQLVQEGAIQLYKNYQTGEYMLGAVGQLQFEVFKHRMEGEYNAEVVMTPMGKKTVRWISEDDLDQHMSSSRNILAKDRFDQPVFLFENDFALRWFADKYPDVTLEEKM</sequence>
<gene>
    <name evidence="1" type="primary">prfC</name>
    <name type="ordered locus">Spy49_1133c</name>
</gene>
<organism>
    <name type="scientific">Streptococcus pyogenes serotype M49 (strain NZ131)</name>
    <dbReference type="NCBI Taxonomy" id="471876"/>
    <lineage>
        <taxon>Bacteria</taxon>
        <taxon>Bacillati</taxon>
        <taxon>Bacillota</taxon>
        <taxon>Bacilli</taxon>
        <taxon>Lactobacillales</taxon>
        <taxon>Streptococcaceae</taxon>
        <taxon>Streptococcus</taxon>
    </lineage>
</organism>
<feature type="chain" id="PRO_1000092508" description="Peptide chain release factor 3">
    <location>
        <begin position="1"/>
        <end position="514"/>
    </location>
</feature>
<feature type="domain" description="tr-type G">
    <location>
        <begin position="8"/>
        <end position="268"/>
    </location>
</feature>
<feature type="binding site" evidence="1">
    <location>
        <begin position="17"/>
        <end position="24"/>
    </location>
    <ligand>
        <name>GTP</name>
        <dbReference type="ChEBI" id="CHEBI:37565"/>
    </ligand>
</feature>
<feature type="binding site" evidence="1">
    <location>
        <begin position="85"/>
        <end position="89"/>
    </location>
    <ligand>
        <name>GTP</name>
        <dbReference type="ChEBI" id="CHEBI:37565"/>
    </ligand>
</feature>
<feature type="binding site" evidence="1">
    <location>
        <begin position="139"/>
        <end position="142"/>
    </location>
    <ligand>
        <name>GTP</name>
        <dbReference type="ChEBI" id="CHEBI:37565"/>
    </ligand>
</feature>
<dbReference type="EMBL" id="CP000829">
    <property type="protein sequence ID" value="ACI61422.1"/>
    <property type="molecule type" value="Genomic_DNA"/>
</dbReference>
<dbReference type="SMR" id="B5XM60"/>
<dbReference type="KEGG" id="soz:Spy49_1133c"/>
<dbReference type="HOGENOM" id="CLU_002794_2_1_9"/>
<dbReference type="Proteomes" id="UP000001039">
    <property type="component" value="Chromosome"/>
</dbReference>
<dbReference type="GO" id="GO:0005829">
    <property type="term" value="C:cytosol"/>
    <property type="evidence" value="ECO:0007669"/>
    <property type="project" value="TreeGrafter"/>
</dbReference>
<dbReference type="GO" id="GO:0005525">
    <property type="term" value="F:GTP binding"/>
    <property type="evidence" value="ECO:0007669"/>
    <property type="project" value="UniProtKB-UniRule"/>
</dbReference>
<dbReference type="GO" id="GO:0003924">
    <property type="term" value="F:GTPase activity"/>
    <property type="evidence" value="ECO:0007669"/>
    <property type="project" value="InterPro"/>
</dbReference>
<dbReference type="GO" id="GO:0016150">
    <property type="term" value="F:translation release factor activity, codon nonspecific"/>
    <property type="evidence" value="ECO:0007669"/>
    <property type="project" value="TreeGrafter"/>
</dbReference>
<dbReference type="GO" id="GO:0016149">
    <property type="term" value="F:translation release factor activity, codon specific"/>
    <property type="evidence" value="ECO:0007669"/>
    <property type="project" value="UniProtKB-UniRule"/>
</dbReference>
<dbReference type="GO" id="GO:0006449">
    <property type="term" value="P:regulation of translational termination"/>
    <property type="evidence" value="ECO:0007669"/>
    <property type="project" value="UniProtKB-UniRule"/>
</dbReference>
<dbReference type="CDD" id="cd04169">
    <property type="entry name" value="RF3"/>
    <property type="match status" value="1"/>
</dbReference>
<dbReference type="CDD" id="cd16259">
    <property type="entry name" value="RF3_III"/>
    <property type="match status" value="1"/>
</dbReference>
<dbReference type="FunFam" id="2.40.30.10:FF:000040">
    <property type="entry name" value="Peptide chain release factor 3"/>
    <property type="match status" value="1"/>
</dbReference>
<dbReference type="FunFam" id="3.30.70.3280:FF:000001">
    <property type="entry name" value="Peptide chain release factor 3"/>
    <property type="match status" value="1"/>
</dbReference>
<dbReference type="FunFam" id="3.40.50.300:FF:000542">
    <property type="entry name" value="Peptide chain release factor 3"/>
    <property type="match status" value="1"/>
</dbReference>
<dbReference type="Gene3D" id="3.40.50.300">
    <property type="entry name" value="P-loop containing nucleotide triphosphate hydrolases"/>
    <property type="match status" value="1"/>
</dbReference>
<dbReference type="Gene3D" id="3.30.70.3280">
    <property type="entry name" value="Peptide chain release factor 3, domain III"/>
    <property type="match status" value="1"/>
</dbReference>
<dbReference type="Gene3D" id="2.40.30.10">
    <property type="entry name" value="Translation factors"/>
    <property type="match status" value="1"/>
</dbReference>
<dbReference type="HAMAP" id="MF_00072">
    <property type="entry name" value="Rel_fac_3"/>
    <property type="match status" value="1"/>
</dbReference>
<dbReference type="InterPro" id="IPR053905">
    <property type="entry name" value="EF-G-like_DII"/>
</dbReference>
<dbReference type="InterPro" id="IPR035647">
    <property type="entry name" value="EFG_III/V"/>
</dbReference>
<dbReference type="InterPro" id="IPR031157">
    <property type="entry name" value="G_TR_CS"/>
</dbReference>
<dbReference type="InterPro" id="IPR027417">
    <property type="entry name" value="P-loop_NTPase"/>
</dbReference>
<dbReference type="InterPro" id="IPR004548">
    <property type="entry name" value="PrfC"/>
</dbReference>
<dbReference type="InterPro" id="IPR032090">
    <property type="entry name" value="RF3_C"/>
</dbReference>
<dbReference type="InterPro" id="IPR038467">
    <property type="entry name" value="RF3_dom_3_sf"/>
</dbReference>
<dbReference type="InterPro" id="IPR041732">
    <property type="entry name" value="RF3_GTP-bd"/>
</dbReference>
<dbReference type="InterPro" id="IPR005225">
    <property type="entry name" value="Small_GTP-bd"/>
</dbReference>
<dbReference type="InterPro" id="IPR000795">
    <property type="entry name" value="T_Tr_GTP-bd_dom"/>
</dbReference>
<dbReference type="InterPro" id="IPR009000">
    <property type="entry name" value="Transl_B-barrel_sf"/>
</dbReference>
<dbReference type="NCBIfam" id="TIGR00503">
    <property type="entry name" value="prfC"/>
    <property type="match status" value="1"/>
</dbReference>
<dbReference type="NCBIfam" id="NF001964">
    <property type="entry name" value="PRK00741.1"/>
    <property type="match status" value="1"/>
</dbReference>
<dbReference type="NCBIfam" id="TIGR00231">
    <property type="entry name" value="small_GTP"/>
    <property type="match status" value="1"/>
</dbReference>
<dbReference type="PANTHER" id="PTHR43556">
    <property type="entry name" value="PEPTIDE CHAIN RELEASE FACTOR RF3"/>
    <property type="match status" value="1"/>
</dbReference>
<dbReference type="PANTHER" id="PTHR43556:SF2">
    <property type="entry name" value="PEPTIDE CHAIN RELEASE FACTOR RF3"/>
    <property type="match status" value="1"/>
</dbReference>
<dbReference type="Pfam" id="PF22042">
    <property type="entry name" value="EF-G_D2"/>
    <property type="match status" value="1"/>
</dbReference>
<dbReference type="Pfam" id="PF00009">
    <property type="entry name" value="GTP_EFTU"/>
    <property type="match status" value="1"/>
</dbReference>
<dbReference type="Pfam" id="PF16658">
    <property type="entry name" value="RF3_C"/>
    <property type="match status" value="1"/>
</dbReference>
<dbReference type="PRINTS" id="PR00315">
    <property type="entry name" value="ELONGATNFCT"/>
</dbReference>
<dbReference type="PRINTS" id="PR01037">
    <property type="entry name" value="TCRTETOQM"/>
</dbReference>
<dbReference type="SUPFAM" id="SSF54980">
    <property type="entry name" value="EF-G C-terminal domain-like"/>
    <property type="match status" value="1"/>
</dbReference>
<dbReference type="SUPFAM" id="SSF52540">
    <property type="entry name" value="P-loop containing nucleoside triphosphate hydrolases"/>
    <property type="match status" value="1"/>
</dbReference>
<dbReference type="SUPFAM" id="SSF50447">
    <property type="entry name" value="Translation proteins"/>
    <property type="match status" value="1"/>
</dbReference>
<dbReference type="PROSITE" id="PS00301">
    <property type="entry name" value="G_TR_1"/>
    <property type="match status" value="1"/>
</dbReference>
<dbReference type="PROSITE" id="PS51722">
    <property type="entry name" value="G_TR_2"/>
    <property type="match status" value="1"/>
</dbReference>
<comment type="function">
    <text evidence="1">Increases the formation of ribosomal termination complexes and stimulates activities of RF-1 and RF-2. It binds guanine nucleotides and has strong preference for UGA stop codons. It may interact directly with the ribosome. The stimulation of RF-1 and RF-2 is significantly reduced by GTP and GDP, but not by GMP.</text>
</comment>
<comment type="subcellular location">
    <subcellularLocation>
        <location evidence="1">Cytoplasm</location>
    </subcellularLocation>
</comment>
<comment type="similarity">
    <text evidence="1">Belongs to the TRAFAC class translation factor GTPase superfamily. Classic translation factor GTPase family. PrfC subfamily.</text>
</comment>